<comment type="function">
    <text evidence="1">Component of the small ribosomal subunit. The ribosome is a large ribonucleoprotein complex responsible for the synthesis of proteins in the cell.</text>
</comment>
<comment type="subunit">
    <text evidence="1">Component of the small ribosomal subunit.</text>
</comment>
<comment type="subcellular location">
    <subcellularLocation>
        <location evidence="1">Cytoplasm</location>
    </subcellularLocation>
</comment>
<comment type="similarity">
    <text evidence="2">Belongs to the universal ribosomal protein uS13 family.</text>
</comment>
<name>RS18_BOVIN</name>
<reference key="1">
    <citation type="submission" date="2005-08" db="EMBL/GenBank/DDBJ databases">
        <authorList>
            <consortium name="NIH - Mammalian Gene Collection (MGC) project"/>
        </authorList>
    </citation>
    <scope>NUCLEOTIDE SEQUENCE [LARGE SCALE MRNA]</scope>
    <source>
        <strain>Crossbred X Angus</strain>
        <tissue>Ileum</tissue>
    </source>
</reference>
<keyword id="KW-0007">Acetylation</keyword>
<keyword id="KW-0963">Cytoplasm</keyword>
<keyword id="KW-1017">Isopeptide bond</keyword>
<keyword id="KW-1185">Reference proteome</keyword>
<keyword id="KW-0687">Ribonucleoprotein</keyword>
<keyword id="KW-0689">Ribosomal protein</keyword>
<keyword id="KW-0694">RNA-binding</keyword>
<keyword id="KW-0699">rRNA-binding</keyword>
<keyword id="KW-0832">Ubl conjugation</keyword>
<sequence>MSLVIPEKFQHILRVLNTNIDGRRKIAFAITAIKGVGRRYAHVVLRKADIDLTKRAGELTEDEVERVITIMQNPRQYKIPDWFLNRQKDVKDGKYSQVLANGLDNKLREDLERLKKIRAHRGLRHFWGLRVRGQHTKTTGRRGRTVGVSKKK</sequence>
<proteinExistence type="evidence at transcript level"/>
<dbReference type="EMBL" id="BC102293">
    <property type="protein sequence ID" value="AAI02294.1"/>
    <property type="molecule type" value="mRNA"/>
</dbReference>
<dbReference type="RefSeq" id="NP_001028786.1">
    <property type="nucleotide sequence ID" value="NM_001033614.2"/>
</dbReference>
<dbReference type="SMR" id="Q3T0R1"/>
<dbReference type="FunCoup" id="Q3T0R1">
    <property type="interactions" value="2563"/>
</dbReference>
<dbReference type="STRING" id="9913.ENSBTAP00000063082"/>
<dbReference type="PaxDb" id="9913-ENSBTAP00000003431"/>
<dbReference type="PeptideAtlas" id="Q3T0R1"/>
<dbReference type="GeneID" id="326602"/>
<dbReference type="KEGG" id="bta:326602"/>
<dbReference type="CTD" id="6222"/>
<dbReference type="VEuPathDB" id="HostDB:ENSBTAG00000002648"/>
<dbReference type="eggNOG" id="KOG3311">
    <property type="taxonomic scope" value="Eukaryota"/>
</dbReference>
<dbReference type="HOGENOM" id="CLU_103849_0_1_1"/>
<dbReference type="InParanoid" id="Q3T0R1"/>
<dbReference type="OMA" id="SYKGVRH"/>
<dbReference type="OrthoDB" id="1702480at2759"/>
<dbReference type="TreeFam" id="TF317649"/>
<dbReference type="Reactome" id="R-BTA-156827">
    <property type="pathway name" value="L13a-mediated translational silencing of Ceruloplasmin expression"/>
</dbReference>
<dbReference type="Reactome" id="R-BTA-1799339">
    <property type="pathway name" value="SRP-dependent cotranslational protein targeting to membrane"/>
</dbReference>
<dbReference type="Reactome" id="R-BTA-6791226">
    <property type="pathway name" value="Major pathway of rRNA processing in the nucleolus and cytosol"/>
</dbReference>
<dbReference type="Reactome" id="R-BTA-72649">
    <property type="pathway name" value="Translation initiation complex formation"/>
</dbReference>
<dbReference type="Reactome" id="R-BTA-72689">
    <property type="pathway name" value="Formation of a pool of free 40S subunits"/>
</dbReference>
<dbReference type="Reactome" id="R-BTA-72695">
    <property type="pathway name" value="Formation of the ternary complex, and subsequently, the 43S complex"/>
</dbReference>
<dbReference type="Reactome" id="R-BTA-72702">
    <property type="pathway name" value="Ribosomal scanning and start codon recognition"/>
</dbReference>
<dbReference type="Reactome" id="R-BTA-72706">
    <property type="pathway name" value="GTP hydrolysis and joining of the 60S ribosomal subunit"/>
</dbReference>
<dbReference type="Reactome" id="R-BTA-975956">
    <property type="pathway name" value="Nonsense Mediated Decay (NMD) independent of the Exon Junction Complex (EJC)"/>
</dbReference>
<dbReference type="Reactome" id="R-BTA-975957">
    <property type="pathway name" value="Nonsense Mediated Decay (NMD) enhanced by the Exon Junction Complex (EJC)"/>
</dbReference>
<dbReference type="Proteomes" id="UP000009136">
    <property type="component" value="Chromosome 23"/>
</dbReference>
<dbReference type="Bgee" id="ENSBTAG00000002648">
    <property type="expression patterns" value="Expressed in digestive system secreted substance and 104 other cell types or tissues"/>
</dbReference>
<dbReference type="GO" id="GO:0005829">
    <property type="term" value="C:cytosol"/>
    <property type="evidence" value="ECO:0000318"/>
    <property type="project" value="GO_Central"/>
</dbReference>
<dbReference type="GO" id="GO:0022627">
    <property type="term" value="C:cytosolic small ribosomal subunit"/>
    <property type="evidence" value="ECO:0000250"/>
    <property type="project" value="AgBase"/>
</dbReference>
<dbReference type="GO" id="GO:0015935">
    <property type="term" value="C:small ribosomal subunit"/>
    <property type="evidence" value="ECO:0000250"/>
    <property type="project" value="AgBase"/>
</dbReference>
<dbReference type="GO" id="GO:0019843">
    <property type="term" value="F:rRNA binding"/>
    <property type="evidence" value="ECO:0007669"/>
    <property type="project" value="UniProtKB-KW"/>
</dbReference>
<dbReference type="GO" id="GO:0003735">
    <property type="term" value="F:structural constituent of ribosome"/>
    <property type="evidence" value="ECO:0007669"/>
    <property type="project" value="InterPro"/>
</dbReference>
<dbReference type="GO" id="GO:0006412">
    <property type="term" value="P:translation"/>
    <property type="evidence" value="ECO:0007669"/>
    <property type="project" value="InterPro"/>
</dbReference>
<dbReference type="FunFam" id="1.10.8.50:FF:000002">
    <property type="entry name" value="40S ribosomal protein S18"/>
    <property type="match status" value="1"/>
</dbReference>
<dbReference type="FunFam" id="4.10.910.10:FF:000002">
    <property type="entry name" value="40S ribosomal protein S18"/>
    <property type="match status" value="1"/>
</dbReference>
<dbReference type="Gene3D" id="1.10.8.50">
    <property type="match status" value="1"/>
</dbReference>
<dbReference type="Gene3D" id="4.10.910.10">
    <property type="entry name" value="30s ribosomal protein s13, domain 2"/>
    <property type="match status" value="1"/>
</dbReference>
<dbReference type="HAMAP" id="MF_01315">
    <property type="entry name" value="Ribosomal_uS13"/>
    <property type="match status" value="1"/>
</dbReference>
<dbReference type="InterPro" id="IPR027437">
    <property type="entry name" value="Rbsml_uS13_C"/>
</dbReference>
<dbReference type="InterPro" id="IPR001892">
    <property type="entry name" value="Ribosomal_uS13"/>
</dbReference>
<dbReference type="InterPro" id="IPR010979">
    <property type="entry name" value="Ribosomal_uS13-like_H2TH"/>
</dbReference>
<dbReference type="InterPro" id="IPR018269">
    <property type="entry name" value="Ribosomal_uS13_CS"/>
</dbReference>
<dbReference type="NCBIfam" id="NF003140">
    <property type="entry name" value="PRK04053.1"/>
    <property type="match status" value="1"/>
</dbReference>
<dbReference type="PANTHER" id="PTHR10871">
    <property type="entry name" value="30S RIBOSOMAL PROTEIN S13/40S RIBOSOMAL PROTEIN S18"/>
    <property type="match status" value="1"/>
</dbReference>
<dbReference type="PANTHER" id="PTHR10871:SF42">
    <property type="entry name" value="SMALL RIBOSOMAL SUBUNIT PROTEIN US13"/>
    <property type="match status" value="1"/>
</dbReference>
<dbReference type="Pfam" id="PF00416">
    <property type="entry name" value="Ribosomal_S13"/>
    <property type="match status" value="1"/>
</dbReference>
<dbReference type="PIRSF" id="PIRSF002134">
    <property type="entry name" value="Ribosomal_S13"/>
    <property type="match status" value="1"/>
</dbReference>
<dbReference type="SUPFAM" id="SSF46946">
    <property type="entry name" value="S13-like H2TH domain"/>
    <property type="match status" value="1"/>
</dbReference>
<dbReference type="PROSITE" id="PS00646">
    <property type="entry name" value="RIBOSOMAL_S13_1"/>
    <property type="match status" value="1"/>
</dbReference>
<dbReference type="PROSITE" id="PS50159">
    <property type="entry name" value="RIBOSOMAL_S13_2"/>
    <property type="match status" value="1"/>
</dbReference>
<accession>Q3T0R1</accession>
<feature type="initiator methionine" description="Removed" evidence="1">
    <location>
        <position position="1"/>
    </location>
</feature>
<feature type="chain" id="PRO_0000231593" description="Small ribosomal subunit protein uS13">
    <location>
        <begin position="2"/>
        <end position="152"/>
    </location>
</feature>
<feature type="modified residue" description="N-acetylserine" evidence="1">
    <location>
        <position position="2"/>
    </location>
</feature>
<feature type="modified residue" description="N6-acetyllysine; alternate" evidence="1">
    <location>
        <position position="94"/>
    </location>
</feature>
<feature type="modified residue" description="N6-acetyllysine; alternate" evidence="1">
    <location>
        <position position="106"/>
    </location>
</feature>
<feature type="cross-link" description="Glycyl lysine isopeptide (Lys-Gly) (interchain with G-Cter in SUMO2)" evidence="1">
    <location>
        <position position="91"/>
    </location>
</feature>
<feature type="cross-link" description="Glycyl lysine isopeptide (Lys-Gly) (interchain with G-Cter in SUMO2); alternate" evidence="1">
    <location>
        <position position="94"/>
    </location>
</feature>
<feature type="cross-link" description="Glycyl lysine isopeptide (Lys-Gly) (interchain with G-Cter in SUMO2); alternate" evidence="1">
    <location>
        <position position="106"/>
    </location>
</feature>
<gene>
    <name type="primary">RPS18</name>
</gene>
<protein>
    <recommendedName>
        <fullName evidence="2">Small ribosomal subunit protein uS13</fullName>
    </recommendedName>
    <alternativeName>
        <fullName>40S ribosomal protein S18</fullName>
    </alternativeName>
</protein>
<organism>
    <name type="scientific">Bos taurus</name>
    <name type="common">Bovine</name>
    <dbReference type="NCBI Taxonomy" id="9913"/>
    <lineage>
        <taxon>Eukaryota</taxon>
        <taxon>Metazoa</taxon>
        <taxon>Chordata</taxon>
        <taxon>Craniata</taxon>
        <taxon>Vertebrata</taxon>
        <taxon>Euteleostomi</taxon>
        <taxon>Mammalia</taxon>
        <taxon>Eutheria</taxon>
        <taxon>Laurasiatheria</taxon>
        <taxon>Artiodactyla</taxon>
        <taxon>Ruminantia</taxon>
        <taxon>Pecora</taxon>
        <taxon>Bovidae</taxon>
        <taxon>Bovinae</taxon>
        <taxon>Bos</taxon>
    </lineage>
</organism>
<evidence type="ECO:0000250" key="1">
    <source>
        <dbReference type="UniProtKB" id="P62269"/>
    </source>
</evidence>
<evidence type="ECO:0000305" key="2"/>